<organism>
    <name type="scientific">Thermus aquaticus</name>
    <dbReference type="NCBI Taxonomy" id="271"/>
    <lineage>
        <taxon>Bacteria</taxon>
        <taxon>Thermotogati</taxon>
        <taxon>Deinococcota</taxon>
        <taxon>Deinococci</taxon>
        <taxon>Thermales</taxon>
        <taxon>Thermaceae</taxon>
        <taxon>Thermus</taxon>
    </lineage>
</organism>
<gene>
    <name type="primary">pyrR</name>
</gene>
<dbReference type="EC" id="2.4.2.9"/>
<dbReference type="EMBL" id="Y09536">
    <property type="protein sequence ID" value="CAA70728.1"/>
    <property type="molecule type" value="Genomic_DNA"/>
</dbReference>
<dbReference type="SMR" id="P96078"/>
<dbReference type="GO" id="GO:0003723">
    <property type="term" value="F:RNA binding"/>
    <property type="evidence" value="ECO:0007669"/>
    <property type="project" value="UniProtKB-KW"/>
</dbReference>
<dbReference type="GO" id="GO:0004845">
    <property type="term" value="F:uracil phosphoribosyltransferase activity"/>
    <property type="evidence" value="ECO:0007669"/>
    <property type="project" value="UniProtKB-UniRule"/>
</dbReference>
<dbReference type="GO" id="GO:0006353">
    <property type="term" value="P:DNA-templated transcription termination"/>
    <property type="evidence" value="ECO:0007669"/>
    <property type="project" value="UniProtKB-KW"/>
</dbReference>
<dbReference type="GO" id="GO:0006355">
    <property type="term" value="P:regulation of DNA-templated transcription"/>
    <property type="evidence" value="ECO:0007669"/>
    <property type="project" value="UniProtKB-UniRule"/>
</dbReference>
<dbReference type="CDD" id="cd06223">
    <property type="entry name" value="PRTases_typeI"/>
    <property type="match status" value="1"/>
</dbReference>
<dbReference type="FunFam" id="3.40.50.2020:FF:000020">
    <property type="entry name" value="Bifunctional protein PyrR"/>
    <property type="match status" value="1"/>
</dbReference>
<dbReference type="Gene3D" id="3.40.50.2020">
    <property type="match status" value="1"/>
</dbReference>
<dbReference type="HAMAP" id="MF_01219">
    <property type="entry name" value="PyrR"/>
    <property type="match status" value="1"/>
</dbReference>
<dbReference type="InterPro" id="IPR000836">
    <property type="entry name" value="PRibTrfase_dom"/>
</dbReference>
<dbReference type="InterPro" id="IPR029057">
    <property type="entry name" value="PRTase-like"/>
</dbReference>
<dbReference type="InterPro" id="IPR023050">
    <property type="entry name" value="PyrR"/>
</dbReference>
<dbReference type="InterPro" id="IPR050137">
    <property type="entry name" value="PyrR_bifunctional"/>
</dbReference>
<dbReference type="NCBIfam" id="NF003545">
    <property type="entry name" value="PRK05205.1-1"/>
    <property type="match status" value="1"/>
</dbReference>
<dbReference type="NCBIfam" id="NF003547">
    <property type="entry name" value="PRK05205.1-3"/>
    <property type="match status" value="1"/>
</dbReference>
<dbReference type="NCBIfam" id="NF003548">
    <property type="entry name" value="PRK05205.1-4"/>
    <property type="match status" value="1"/>
</dbReference>
<dbReference type="NCBIfam" id="NF003549">
    <property type="entry name" value="PRK05205.1-5"/>
    <property type="match status" value="1"/>
</dbReference>
<dbReference type="PANTHER" id="PTHR11608">
    <property type="entry name" value="BIFUNCTIONAL PROTEIN PYRR"/>
    <property type="match status" value="1"/>
</dbReference>
<dbReference type="PANTHER" id="PTHR11608:SF0">
    <property type="entry name" value="BIFUNCTIONAL PROTEIN PYRR"/>
    <property type="match status" value="1"/>
</dbReference>
<dbReference type="Pfam" id="PF00156">
    <property type="entry name" value="Pribosyltran"/>
    <property type="match status" value="1"/>
</dbReference>
<dbReference type="SUPFAM" id="SSF53271">
    <property type="entry name" value="PRTase-like"/>
    <property type="match status" value="1"/>
</dbReference>
<evidence type="ECO:0000250" key="1"/>
<evidence type="ECO:0000305" key="2"/>
<protein>
    <recommendedName>
        <fullName>Bifunctional protein PyrR</fullName>
    </recommendedName>
    <domain>
        <recommendedName>
            <fullName>Pyrimidine operon regulatory protein</fullName>
        </recommendedName>
    </domain>
    <domain>
        <recommendedName>
            <fullName>Uracil phosphoribosyltransferase</fullName>
            <shortName>UPRTase</shortName>
            <ecNumber>2.4.2.9</ecNumber>
        </recommendedName>
    </domain>
</protein>
<proteinExistence type="inferred from homology"/>
<sequence>MRFKAELMNAPEMRRALYRIAHEIVEANKGTEGLALVGIHTRGIPLAHRIARFIAEFEGKEVPVGVLDITLYRDDLTEIGYRPQVRETRIPFDLTGKAIVLVDDVLYTGRTARAALDALIDLGRPRRIYLAVLVDRGHRELPIRADFVGKNVPTSRNEVVKVKVEEVDGEDRVELWEKEGA</sequence>
<name>PYRR_THEAQ</name>
<feature type="chain" id="PRO_0000183072" description="Bifunctional protein PyrR">
    <location>
        <begin position="1"/>
        <end position="181"/>
    </location>
</feature>
<feature type="short sequence motif" description="PRPP-binding" evidence="1">
    <location>
        <begin position="99"/>
        <end position="111"/>
    </location>
</feature>
<feature type="binding site" description="in other chain" evidence="1">
    <location>
        <begin position="41"/>
        <end position="42"/>
    </location>
    <ligand>
        <name>substrate</name>
        <note>ligand shared between dimeric partners</note>
    </ligand>
</feature>
<feature type="binding site" evidence="1">
    <location>
        <position position="82"/>
    </location>
    <ligand>
        <name>substrate</name>
        <note>ligand shared between dimeric partners</note>
    </ligand>
</feature>
<feature type="binding site" description="in other chain" evidence="1">
    <location>
        <position position="86"/>
    </location>
    <ligand>
        <name>substrate</name>
        <note>ligand shared between dimeric partners</note>
    </ligand>
</feature>
<feature type="binding site" description="in other chain" evidence="1">
    <location>
        <begin position="103"/>
        <end position="111"/>
    </location>
    <ligand>
        <name>substrate</name>
        <note>ligand shared between dimeric partners</note>
    </ligand>
</feature>
<feature type="binding site" description="in other chain" evidence="1">
    <location>
        <position position="136"/>
    </location>
    <ligand>
        <name>substrate</name>
        <note>ligand shared between dimeric partners</note>
    </ligand>
</feature>
<feature type="binding site" description="in other chain" evidence="1">
    <location>
        <position position="160"/>
    </location>
    <ligand>
        <name>substrate</name>
        <note>ligand shared between dimeric partners</note>
    </ligand>
</feature>
<keyword id="KW-0328">Glycosyltransferase</keyword>
<keyword id="KW-0678">Repressor</keyword>
<keyword id="KW-0694">RNA-binding</keyword>
<keyword id="KW-0804">Transcription</keyword>
<keyword id="KW-0805">Transcription regulation</keyword>
<keyword id="KW-0806">Transcription termination</keyword>
<keyword id="KW-0808">Transferase</keyword>
<comment type="function">
    <text>Probably regulates transcriptional attenuation of the pyrimidine nucleotide (pyr) operon in response to exogenous pyrimidines. In contrast to pyr attenuation in Bacillus spp., PyrR from Thermus could act as a translational repressor: the binding of PyrR at its proposed recognition site in the transcript would prevent initiation of translation of the leader peptide, resulting in terminator formation and reduced expression of downstream genes.</text>
</comment>
<comment type="function">
    <text>Also displays a uracil phosphoribosyltransferase activity.</text>
</comment>
<comment type="catalytic activity">
    <reaction>
        <text>UMP + diphosphate = 5-phospho-alpha-D-ribose 1-diphosphate + uracil</text>
        <dbReference type="Rhea" id="RHEA:13017"/>
        <dbReference type="ChEBI" id="CHEBI:17568"/>
        <dbReference type="ChEBI" id="CHEBI:33019"/>
        <dbReference type="ChEBI" id="CHEBI:57865"/>
        <dbReference type="ChEBI" id="CHEBI:58017"/>
        <dbReference type="EC" id="2.4.2.9"/>
    </reaction>
</comment>
<comment type="similarity">
    <text evidence="2">Belongs to the purine/pyrimidine phosphoribosyltransferase family. PyrR subfamily.</text>
</comment>
<accession>P96078</accession>
<reference key="1">
    <citation type="journal article" date="1997" name="J. Bacteriol.">
        <title>Structure and expression of a pyrimidine gene cluster from the extreme thermophile Thermus strain ZO5.</title>
        <authorList>
            <person name="van de Casteele M."/>
            <person name="Chen P."/>
            <person name="Roovers M."/>
            <person name="Legrain C."/>
            <person name="Glansdorff N."/>
        </authorList>
    </citation>
    <scope>NUCLEOTIDE SEQUENCE [GENOMIC DNA]</scope>
    <source>
        <strain>ZO5</strain>
    </source>
</reference>